<sequence>MSEMTYKDAGVDIDKEAFAVRAIRDVLEKYKVEPEGCREVEGIGHYAAVLEVHGELLTLNVDGVGSKVLVAQLVGRYDTVGIDAIAMNANDAVCLGARPLAFLDYLAMEDPDPDVCAEIAEGLGKGAREAGAPIVGGELATLPEVIRGKEEGRGFDLVVACLGRVEGDPITGEDVEPGDAIVGLRSSGIHSNGLTLARKVLLSEYDVHDELPHGRTVAEELLEPTRIYVRPVMEVLRDYEVRGIAHITGGGVENLKRLRDDVRYVLDDPFEPHPVFEIIRELGNVPVEEMYRTFNMGMGMALIVPEEEAEDVVDTVSKHVEAKIVGHVEEGRGVVVHMDGHEVKL</sequence>
<dbReference type="EC" id="6.3.3.1" evidence="1"/>
<dbReference type="EMBL" id="AE009439">
    <property type="protein sequence ID" value="AAM02439.1"/>
    <property type="molecule type" value="Genomic_DNA"/>
</dbReference>
<dbReference type="SMR" id="Q8TW12"/>
<dbReference type="FunCoup" id="Q8TW12">
    <property type="interactions" value="124"/>
</dbReference>
<dbReference type="STRING" id="190192.MK1226"/>
<dbReference type="PaxDb" id="190192-MK1226"/>
<dbReference type="EnsemblBacteria" id="AAM02439">
    <property type="protein sequence ID" value="AAM02439"/>
    <property type="gene ID" value="MK1226"/>
</dbReference>
<dbReference type="KEGG" id="mka:MK1226"/>
<dbReference type="PATRIC" id="fig|190192.8.peg.1329"/>
<dbReference type="HOGENOM" id="CLU_047116_0_0_2"/>
<dbReference type="InParanoid" id="Q8TW12"/>
<dbReference type="UniPathway" id="UPA00074">
    <property type="reaction ID" value="UER00129"/>
</dbReference>
<dbReference type="Proteomes" id="UP000001826">
    <property type="component" value="Chromosome"/>
</dbReference>
<dbReference type="GO" id="GO:0005829">
    <property type="term" value="C:cytosol"/>
    <property type="evidence" value="ECO:0007669"/>
    <property type="project" value="TreeGrafter"/>
</dbReference>
<dbReference type="GO" id="GO:0005524">
    <property type="term" value="F:ATP binding"/>
    <property type="evidence" value="ECO:0007669"/>
    <property type="project" value="UniProtKB-KW"/>
</dbReference>
<dbReference type="GO" id="GO:0004637">
    <property type="term" value="F:phosphoribosylamine-glycine ligase activity"/>
    <property type="evidence" value="ECO:0007669"/>
    <property type="project" value="TreeGrafter"/>
</dbReference>
<dbReference type="GO" id="GO:0004641">
    <property type="term" value="F:phosphoribosylformylglycinamidine cyclo-ligase activity"/>
    <property type="evidence" value="ECO:0007669"/>
    <property type="project" value="UniProtKB-UniRule"/>
</dbReference>
<dbReference type="GO" id="GO:0006189">
    <property type="term" value="P:'de novo' IMP biosynthetic process"/>
    <property type="evidence" value="ECO:0007669"/>
    <property type="project" value="UniProtKB-UniRule"/>
</dbReference>
<dbReference type="GO" id="GO:0046084">
    <property type="term" value="P:adenine biosynthetic process"/>
    <property type="evidence" value="ECO:0007669"/>
    <property type="project" value="TreeGrafter"/>
</dbReference>
<dbReference type="CDD" id="cd02196">
    <property type="entry name" value="PurM"/>
    <property type="match status" value="1"/>
</dbReference>
<dbReference type="FunFam" id="3.90.650.10:FF:000011">
    <property type="entry name" value="Phosphoribosylformylglycinamidine cyclo-ligase"/>
    <property type="match status" value="1"/>
</dbReference>
<dbReference type="Gene3D" id="3.90.650.10">
    <property type="entry name" value="PurM-like C-terminal domain"/>
    <property type="match status" value="1"/>
</dbReference>
<dbReference type="Gene3D" id="3.30.1330.10">
    <property type="entry name" value="PurM-like, N-terminal domain"/>
    <property type="match status" value="1"/>
</dbReference>
<dbReference type="HAMAP" id="MF_00741">
    <property type="entry name" value="AIRS"/>
    <property type="match status" value="1"/>
</dbReference>
<dbReference type="InterPro" id="IPR010918">
    <property type="entry name" value="PurM-like_C_dom"/>
</dbReference>
<dbReference type="InterPro" id="IPR036676">
    <property type="entry name" value="PurM-like_C_sf"/>
</dbReference>
<dbReference type="InterPro" id="IPR016188">
    <property type="entry name" value="PurM-like_N"/>
</dbReference>
<dbReference type="InterPro" id="IPR036921">
    <property type="entry name" value="PurM-like_N_sf"/>
</dbReference>
<dbReference type="InterPro" id="IPR004733">
    <property type="entry name" value="PurM_cligase"/>
</dbReference>
<dbReference type="NCBIfam" id="TIGR00878">
    <property type="entry name" value="purM"/>
    <property type="match status" value="1"/>
</dbReference>
<dbReference type="PANTHER" id="PTHR10520:SF12">
    <property type="entry name" value="TRIFUNCTIONAL PURINE BIOSYNTHETIC PROTEIN ADENOSINE-3"/>
    <property type="match status" value="1"/>
</dbReference>
<dbReference type="PANTHER" id="PTHR10520">
    <property type="entry name" value="TRIFUNCTIONAL PURINE BIOSYNTHETIC PROTEIN ADENOSINE-3-RELATED"/>
    <property type="match status" value="1"/>
</dbReference>
<dbReference type="Pfam" id="PF00586">
    <property type="entry name" value="AIRS"/>
    <property type="match status" value="1"/>
</dbReference>
<dbReference type="Pfam" id="PF02769">
    <property type="entry name" value="AIRS_C"/>
    <property type="match status" value="1"/>
</dbReference>
<dbReference type="SUPFAM" id="SSF56042">
    <property type="entry name" value="PurM C-terminal domain-like"/>
    <property type="match status" value="1"/>
</dbReference>
<dbReference type="SUPFAM" id="SSF55326">
    <property type="entry name" value="PurM N-terminal domain-like"/>
    <property type="match status" value="1"/>
</dbReference>
<accession>Q8TW12</accession>
<keyword id="KW-0067">ATP-binding</keyword>
<keyword id="KW-0963">Cytoplasm</keyword>
<keyword id="KW-0436">Ligase</keyword>
<keyword id="KW-0547">Nucleotide-binding</keyword>
<keyword id="KW-0658">Purine biosynthesis</keyword>
<keyword id="KW-1185">Reference proteome</keyword>
<feature type="chain" id="PRO_0000148282" description="Phosphoribosylformylglycinamidine cyclo-ligase">
    <location>
        <begin position="1"/>
        <end position="345"/>
    </location>
</feature>
<reference key="1">
    <citation type="journal article" date="2002" name="Proc. Natl. Acad. Sci. U.S.A.">
        <title>The complete genome of hyperthermophile Methanopyrus kandleri AV19 and monophyly of archaeal methanogens.</title>
        <authorList>
            <person name="Slesarev A.I."/>
            <person name="Mezhevaya K.V."/>
            <person name="Makarova K.S."/>
            <person name="Polushin N.N."/>
            <person name="Shcherbinina O.V."/>
            <person name="Shakhova V.V."/>
            <person name="Belova G.I."/>
            <person name="Aravind L."/>
            <person name="Natale D.A."/>
            <person name="Rogozin I.B."/>
            <person name="Tatusov R.L."/>
            <person name="Wolf Y.I."/>
            <person name="Stetter K.O."/>
            <person name="Malykh A.G."/>
            <person name="Koonin E.V."/>
            <person name="Kozyavkin S.A."/>
        </authorList>
    </citation>
    <scope>NUCLEOTIDE SEQUENCE [LARGE SCALE GENOMIC DNA]</scope>
    <source>
        <strain>AV19 / DSM 6324 / JCM 9639 / NBRC 100938</strain>
    </source>
</reference>
<protein>
    <recommendedName>
        <fullName evidence="1">Phosphoribosylformylglycinamidine cyclo-ligase</fullName>
        <ecNumber evidence="1">6.3.3.1</ecNumber>
    </recommendedName>
    <alternativeName>
        <fullName evidence="1">AIR synthase</fullName>
    </alternativeName>
    <alternativeName>
        <fullName evidence="1">AIRS</fullName>
    </alternativeName>
    <alternativeName>
        <fullName evidence="1">Phosphoribosyl-aminoimidazole synthetase</fullName>
    </alternativeName>
</protein>
<organism>
    <name type="scientific">Methanopyrus kandleri (strain AV19 / DSM 6324 / JCM 9639 / NBRC 100938)</name>
    <dbReference type="NCBI Taxonomy" id="190192"/>
    <lineage>
        <taxon>Archaea</taxon>
        <taxon>Methanobacteriati</taxon>
        <taxon>Methanobacteriota</taxon>
        <taxon>Methanomada group</taxon>
        <taxon>Methanopyri</taxon>
        <taxon>Methanopyrales</taxon>
        <taxon>Methanopyraceae</taxon>
        <taxon>Methanopyrus</taxon>
    </lineage>
</organism>
<name>PUR5_METKA</name>
<proteinExistence type="inferred from homology"/>
<gene>
    <name evidence="1" type="primary">purM</name>
    <name type="ordered locus">MK1226</name>
</gene>
<comment type="catalytic activity">
    <reaction evidence="1">
        <text>2-formamido-N(1)-(5-O-phospho-beta-D-ribosyl)acetamidine + ATP = 5-amino-1-(5-phospho-beta-D-ribosyl)imidazole + ADP + phosphate + H(+)</text>
        <dbReference type="Rhea" id="RHEA:23032"/>
        <dbReference type="ChEBI" id="CHEBI:15378"/>
        <dbReference type="ChEBI" id="CHEBI:30616"/>
        <dbReference type="ChEBI" id="CHEBI:43474"/>
        <dbReference type="ChEBI" id="CHEBI:137981"/>
        <dbReference type="ChEBI" id="CHEBI:147287"/>
        <dbReference type="ChEBI" id="CHEBI:456216"/>
        <dbReference type="EC" id="6.3.3.1"/>
    </reaction>
</comment>
<comment type="pathway">
    <text evidence="1">Purine metabolism; IMP biosynthesis via de novo pathway; 5-amino-1-(5-phospho-D-ribosyl)imidazole from N(2)-formyl-N(1)-(5-phospho-D-ribosyl)glycinamide: step 2/2.</text>
</comment>
<comment type="subcellular location">
    <subcellularLocation>
        <location evidence="1">Cytoplasm</location>
    </subcellularLocation>
</comment>
<comment type="similarity">
    <text evidence="1">Belongs to the AIR synthase family.</text>
</comment>
<evidence type="ECO:0000255" key="1">
    <source>
        <dbReference type="HAMAP-Rule" id="MF_00741"/>
    </source>
</evidence>